<accession>B0BUP9</accession>
<feature type="chain" id="PRO_1000086489" description="Large ribosomal subunit protein uL24">
    <location>
        <begin position="1"/>
        <end position="109"/>
    </location>
</feature>
<protein>
    <recommendedName>
        <fullName evidence="1">Large ribosomal subunit protein uL24</fullName>
    </recommendedName>
    <alternativeName>
        <fullName evidence="2">50S ribosomal protein L24</fullName>
    </alternativeName>
</protein>
<keyword id="KW-0687">Ribonucleoprotein</keyword>
<keyword id="KW-0689">Ribosomal protein</keyword>
<keyword id="KW-0694">RNA-binding</keyword>
<keyword id="KW-0699">rRNA-binding</keyword>
<proteinExistence type="inferred from homology"/>
<name>RL24_RICRO</name>
<organism>
    <name type="scientific">Rickettsia rickettsii (strain Iowa)</name>
    <dbReference type="NCBI Taxonomy" id="452659"/>
    <lineage>
        <taxon>Bacteria</taxon>
        <taxon>Pseudomonadati</taxon>
        <taxon>Pseudomonadota</taxon>
        <taxon>Alphaproteobacteria</taxon>
        <taxon>Rickettsiales</taxon>
        <taxon>Rickettsiaceae</taxon>
        <taxon>Rickettsieae</taxon>
        <taxon>Rickettsia</taxon>
        <taxon>spotted fever group</taxon>
    </lineage>
</organism>
<comment type="function">
    <text evidence="1">One of two assembly initiator proteins, it binds directly to the 5'-end of the 23S rRNA, where it nucleates assembly of the 50S subunit.</text>
</comment>
<comment type="function">
    <text evidence="1">One of the proteins that surrounds the polypeptide exit tunnel on the outside of the subunit.</text>
</comment>
<comment type="subunit">
    <text evidence="1">Part of the 50S ribosomal subunit.</text>
</comment>
<comment type="similarity">
    <text evidence="1">Belongs to the universal ribosomal protein uL24 family.</text>
</comment>
<sequence>MIKLKVKKGDEVVVITGKHKGKKGKILKVFPEDSKVIVSGVNVVKKHTKPNQMSEGGIITKELPIHISNIAHIDPKTGNPTKVAFKFLEDGSKVRVAKKSGEIIGKEGK</sequence>
<reference key="1">
    <citation type="journal article" date="2008" name="Infect. Immun.">
        <title>Genomic comparison of virulent Rickettsia rickettsii Sheila Smith and avirulent Rickettsia rickettsii Iowa.</title>
        <authorList>
            <person name="Ellison D.W."/>
            <person name="Clark T.R."/>
            <person name="Sturdevant D.E."/>
            <person name="Virtaneva K."/>
            <person name="Porcella S.F."/>
            <person name="Hackstadt T."/>
        </authorList>
    </citation>
    <scope>NUCLEOTIDE SEQUENCE [LARGE SCALE GENOMIC DNA]</scope>
    <source>
        <strain>Iowa</strain>
    </source>
</reference>
<dbReference type="EMBL" id="CP000766">
    <property type="protein sequence ID" value="ABY72959.1"/>
    <property type="molecule type" value="Genomic_DNA"/>
</dbReference>
<dbReference type="RefSeq" id="WP_012151145.1">
    <property type="nucleotide sequence ID" value="NC_010263.3"/>
</dbReference>
<dbReference type="SMR" id="B0BUP9"/>
<dbReference type="GeneID" id="79937659"/>
<dbReference type="KEGG" id="rrj:RrIowa_1186"/>
<dbReference type="eggNOG" id="COG0198">
    <property type="taxonomic scope" value="Bacteria"/>
</dbReference>
<dbReference type="HOGENOM" id="CLU_093315_2_0_5"/>
<dbReference type="Proteomes" id="UP000000796">
    <property type="component" value="Chromosome"/>
</dbReference>
<dbReference type="GO" id="GO:1990904">
    <property type="term" value="C:ribonucleoprotein complex"/>
    <property type="evidence" value="ECO:0007669"/>
    <property type="project" value="UniProtKB-KW"/>
</dbReference>
<dbReference type="GO" id="GO:0005840">
    <property type="term" value="C:ribosome"/>
    <property type="evidence" value="ECO:0007669"/>
    <property type="project" value="UniProtKB-KW"/>
</dbReference>
<dbReference type="GO" id="GO:0019843">
    <property type="term" value="F:rRNA binding"/>
    <property type="evidence" value="ECO:0007669"/>
    <property type="project" value="UniProtKB-UniRule"/>
</dbReference>
<dbReference type="GO" id="GO:0003735">
    <property type="term" value="F:structural constituent of ribosome"/>
    <property type="evidence" value="ECO:0007669"/>
    <property type="project" value="InterPro"/>
</dbReference>
<dbReference type="GO" id="GO:0006412">
    <property type="term" value="P:translation"/>
    <property type="evidence" value="ECO:0007669"/>
    <property type="project" value="UniProtKB-UniRule"/>
</dbReference>
<dbReference type="CDD" id="cd06089">
    <property type="entry name" value="KOW_RPL26"/>
    <property type="match status" value="1"/>
</dbReference>
<dbReference type="FunFam" id="2.30.30.30:FF:000004">
    <property type="entry name" value="50S ribosomal protein L24"/>
    <property type="match status" value="1"/>
</dbReference>
<dbReference type="Gene3D" id="2.30.30.30">
    <property type="match status" value="1"/>
</dbReference>
<dbReference type="HAMAP" id="MF_01326_B">
    <property type="entry name" value="Ribosomal_uL24_B"/>
    <property type="match status" value="1"/>
</dbReference>
<dbReference type="InterPro" id="IPR005824">
    <property type="entry name" value="KOW"/>
</dbReference>
<dbReference type="InterPro" id="IPR014722">
    <property type="entry name" value="Rib_uL2_dom2"/>
</dbReference>
<dbReference type="InterPro" id="IPR003256">
    <property type="entry name" value="Ribosomal_uL24"/>
</dbReference>
<dbReference type="InterPro" id="IPR005825">
    <property type="entry name" value="Ribosomal_uL24_CS"/>
</dbReference>
<dbReference type="InterPro" id="IPR041988">
    <property type="entry name" value="Ribosomal_uL24_KOW"/>
</dbReference>
<dbReference type="InterPro" id="IPR008991">
    <property type="entry name" value="Translation_prot_SH3-like_sf"/>
</dbReference>
<dbReference type="NCBIfam" id="TIGR01079">
    <property type="entry name" value="rplX_bact"/>
    <property type="match status" value="1"/>
</dbReference>
<dbReference type="PANTHER" id="PTHR12903">
    <property type="entry name" value="MITOCHONDRIAL RIBOSOMAL PROTEIN L24"/>
    <property type="match status" value="1"/>
</dbReference>
<dbReference type="Pfam" id="PF00467">
    <property type="entry name" value="KOW"/>
    <property type="match status" value="1"/>
</dbReference>
<dbReference type="Pfam" id="PF17136">
    <property type="entry name" value="ribosomal_L24"/>
    <property type="match status" value="1"/>
</dbReference>
<dbReference type="SMART" id="SM00739">
    <property type="entry name" value="KOW"/>
    <property type="match status" value="1"/>
</dbReference>
<dbReference type="SUPFAM" id="SSF50104">
    <property type="entry name" value="Translation proteins SH3-like domain"/>
    <property type="match status" value="1"/>
</dbReference>
<dbReference type="PROSITE" id="PS01108">
    <property type="entry name" value="RIBOSOMAL_L24"/>
    <property type="match status" value="1"/>
</dbReference>
<gene>
    <name evidence="1" type="primary">rplX</name>
    <name type="ordered locus">RrIowa_1186</name>
</gene>
<evidence type="ECO:0000255" key="1">
    <source>
        <dbReference type="HAMAP-Rule" id="MF_01326"/>
    </source>
</evidence>
<evidence type="ECO:0000305" key="2"/>